<reference key="1">
    <citation type="journal article" date="2001" name="Microb. Drug Resist.">
        <title>Annotated draft genomic sequence from a Streptococcus pneumoniae type 19F clinical isolate.</title>
        <authorList>
            <person name="Dopazo J."/>
            <person name="Mendoza A."/>
            <person name="Herrero J."/>
            <person name="Caldara F."/>
            <person name="Humbert Y."/>
            <person name="Friedli L."/>
            <person name="Guerrier M."/>
            <person name="Grand-Schenk E."/>
            <person name="Gandin C."/>
            <person name="de Francesco M."/>
            <person name="Polissi A."/>
            <person name="Buell G."/>
            <person name="Feger G."/>
            <person name="Garcia E."/>
            <person name="Peitsch M."/>
            <person name="Garcia-Bustos J.F."/>
        </authorList>
    </citation>
    <scope>NUCLEOTIDE SEQUENCE [LARGE SCALE GENOMIC DNA]</scope>
    <source>
        <strain>G54</strain>
    </source>
</reference>
<reference key="2">
    <citation type="submission" date="2008-03" db="EMBL/GenBank/DDBJ databases">
        <title>Pneumococcal beta glucoside metabolism investigated by whole genome comparison.</title>
        <authorList>
            <person name="Mulas L."/>
            <person name="Trappetti C."/>
            <person name="Hakenbeck R."/>
            <person name="Iannelli F."/>
            <person name="Pozzi G."/>
            <person name="Davidsen T.M."/>
            <person name="Tettelin H."/>
            <person name="Oggioni M."/>
        </authorList>
    </citation>
    <scope>NUCLEOTIDE SEQUENCE [LARGE SCALE GENOMIC DNA]</scope>
    <source>
        <strain>G54</strain>
    </source>
</reference>
<sequence>MRFNQYSYINFPKENVLSELKKCGFDLQNTANHKDSLETFLRRFFFTYQDTNYPLSILAADKKTDLLTFFQSEDELTADIFYTVAFQLLGFSYLVDFEDSDVFRKETGFPIIYGDLIENLYQLLNTRTKKGNTLIDQLVSDGLIPEDNDYHYFNGKSLATFSNQDVIREVVYVESRVDTDQKGLSDLVKVSIIRPRFDGKIPAIMTASPYHQGTNDKASDKALYKMEGELEVKLPHKIELEKPQLNLVQPQGKAELIAEAEEKLTHINSSYTLNDYFLPRGFANLYVSGVGTKDSTGFMTNGDYQQIEAYKNVIDWLNGRCRAFTDHTRQRQVKADWSNGKVATTGLSYLGTMSNGLATTGVDGLEVIIAEAGISSWYNYYRENGLVTSPGGYPGEDFDSLAELTYSRNLLAGDYIRGNEAHQADLEKVKAQLDRKTGDYNQFWHDRNYLLNAHKVKAEVVFTHGSQDWNVKPLHVYQMFHALPTHIHKHLFFHNGAHVYMNNWQSIDFRESINALLTKKLLGQETDFQLPTVIWQDNTAPQTWLSLDNFGGQENCETFSLGQEEQAIQNQYPDKDFERYGKTYQTFNTELYQGKANQITINLPVTKDLHLNGRAQLNLRIKSSTNKGLLSAQLLEFGQKKYLQPYPAILSARTIDNGRYHMLENLCELPFRPEAQRVVTKGYLNLQNRNDLLLVEDITADEWMDVQFELQPTIYKLKEGDTLRLVLYTTDFEITIRDNTDYHLTVDLAQSMLTLPC</sequence>
<feature type="chain" id="PRO_1000132342" description="Xaa-Pro dipeptidyl-peptidase">
    <location>
        <begin position="1"/>
        <end position="757"/>
    </location>
</feature>
<feature type="active site" description="Charge relay system" evidence="1">
    <location>
        <position position="348"/>
    </location>
</feature>
<feature type="active site" description="Charge relay system" evidence="1">
    <location>
        <position position="468"/>
    </location>
</feature>
<feature type="active site" description="Charge relay system" evidence="1">
    <location>
        <position position="498"/>
    </location>
</feature>
<proteinExistence type="inferred from homology"/>
<comment type="function">
    <text evidence="1">Removes N-terminal dipeptides sequentially from polypeptides having unsubstituted N-termini provided that the penultimate residue is proline.</text>
</comment>
<comment type="catalytic activity">
    <reaction evidence="1">
        <text>Hydrolyzes Xaa-Pro-|- bonds to release unblocked, N-terminal dipeptides from substrates including Ala-Pro-|-p-nitroanilide and (sequentially) Tyr-Pro-|-Phe-Pro-|-Gly-Pro-|-Ile.</text>
        <dbReference type="EC" id="3.4.14.11"/>
    </reaction>
</comment>
<comment type="subunit">
    <text evidence="1">Homodimer.</text>
</comment>
<comment type="subcellular location">
    <subcellularLocation>
        <location evidence="1">Cytoplasm</location>
    </subcellularLocation>
</comment>
<comment type="similarity">
    <text evidence="1">Belongs to the peptidase S15 family.</text>
</comment>
<dbReference type="EC" id="3.4.14.11" evidence="1"/>
<dbReference type="EMBL" id="CP001015">
    <property type="protein sequence ID" value="ACF55174.1"/>
    <property type="molecule type" value="Genomic_DNA"/>
</dbReference>
<dbReference type="SMR" id="B5E3Z6"/>
<dbReference type="ESTHER" id="strpn-pepx">
    <property type="family name" value="Lactobacillus_peptidase"/>
</dbReference>
<dbReference type="MEROPS" id="S15.001"/>
<dbReference type="KEGG" id="spx:SPG_0820"/>
<dbReference type="HOGENOM" id="CLU_011800_0_0_9"/>
<dbReference type="GO" id="GO:0005737">
    <property type="term" value="C:cytoplasm"/>
    <property type="evidence" value="ECO:0007669"/>
    <property type="project" value="UniProtKB-SubCell"/>
</dbReference>
<dbReference type="GO" id="GO:0004177">
    <property type="term" value="F:aminopeptidase activity"/>
    <property type="evidence" value="ECO:0007669"/>
    <property type="project" value="UniProtKB-KW"/>
</dbReference>
<dbReference type="GO" id="GO:0008239">
    <property type="term" value="F:dipeptidyl-peptidase activity"/>
    <property type="evidence" value="ECO:0007669"/>
    <property type="project" value="UniProtKB-UniRule"/>
</dbReference>
<dbReference type="GO" id="GO:0008236">
    <property type="term" value="F:serine-type peptidase activity"/>
    <property type="evidence" value="ECO:0007669"/>
    <property type="project" value="UniProtKB-KW"/>
</dbReference>
<dbReference type="GO" id="GO:0006508">
    <property type="term" value="P:proteolysis"/>
    <property type="evidence" value="ECO:0007669"/>
    <property type="project" value="UniProtKB-KW"/>
</dbReference>
<dbReference type="Gene3D" id="1.10.246.70">
    <property type="match status" value="1"/>
</dbReference>
<dbReference type="Gene3D" id="3.40.50.1820">
    <property type="entry name" value="alpha/beta hydrolase"/>
    <property type="match status" value="1"/>
</dbReference>
<dbReference type="Gene3D" id="2.60.120.260">
    <property type="entry name" value="Galactose-binding domain-like"/>
    <property type="match status" value="1"/>
</dbReference>
<dbReference type="HAMAP" id="MF_00698">
    <property type="entry name" value="Aminopeptidase_S15"/>
    <property type="match status" value="1"/>
</dbReference>
<dbReference type="InterPro" id="IPR029058">
    <property type="entry name" value="AB_hydrolase_fold"/>
</dbReference>
<dbReference type="InterPro" id="IPR008979">
    <property type="entry name" value="Galactose-bd-like_sf"/>
</dbReference>
<dbReference type="InterPro" id="IPR008252">
    <property type="entry name" value="Pept_S15_Xpro"/>
</dbReference>
<dbReference type="InterPro" id="IPR015251">
    <property type="entry name" value="PepX_N_dom"/>
</dbReference>
<dbReference type="InterPro" id="IPR036313">
    <property type="entry name" value="PepX_N_dom_sf"/>
</dbReference>
<dbReference type="InterPro" id="IPR000383">
    <property type="entry name" value="Xaa-Pro-like_dom"/>
</dbReference>
<dbReference type="InterPro" id="IPR013736">
    <property type="entry name" value="Xaa-Pro_dipept_C"/>
</dbReference>
<dbReference type="InterPro" id="IPR050585">
    <property type="entry name" value="Xaa-Pro_dipeptidyl-ppase/CocE"/>
</dbReference>
<dbReference type="NCBIfam" id="NF003783">
    <property type="entry name" value="PRK05371.1-4"/>
    <property type="match status" value="1"/>
</dbReference>
<dbReference type="PANTHER" id="PTHR43056:SF10">
    <property type="entry name" value="COCE_NOND FAMILY, PUTATIVE (AFU_ORTHOLOGUE AFUA_7G00600)-RELATED"/>
    <property type="match status" value="1"/>
</dbReference>
<dbReference type="PANTHER" id="PTHR43056">
    <property type="entry name" value="PEPTIDASE S9 PROLYL OLIGOPEPTIDASE"/>
    <property type="match status" value="1"/>
</dbReference>
<dbReference type="Pfam" id="PF02129">
    <property type="entry name" value="Peptidase_S15"/>
    <property type="match status" value="1"/>
</dbReference>
<dbReference type="Pfam" id="PF08530">
    <property type="entry name" value="PepX_C"/>
    <property type="match status" value="1"/>
</dbReference>
<dbReference type="Pfam" id="PF09168">
    <property type="entry name" value="PepX_N"/>
    <property type="match status" value="1"/>
</dbReference>
<dbReference type="PRINTS" id="PR00923">
    <property type="entry name" value="LACTOPTASE"/>
</dbReference>
<dbReference type="SMART" id="SM00939">
    <property type="entry name" value="PepX_C"/>
    <property type="match status" value="1"/>
</dbReference>
<dbReference type="SMART" id="SM00940">
    <property type="entry name" value="PepX_N"/>
    <property type="match status" value="1"/>
</dbReference>
<dbReference type="SUPFAM" id="SSF53474">
    <property type="entry name" value="alpha/beta-Hydrolases"/>
    <property type="match status" value="1"/>
</dbReference>
<dbReference type="SUPFAM" id="SSF49785">
    <property type="entry name" value="Galactose-binding domain-like"/>
    <property type="match status" value="1"/>
</dbReference>
<dbReference type="SUPFAM" id="SSF81761">
    <property type="entry name" value="X-Prolyl dipeptidyl aminopeptidase PepX, N-terminal domain"/>
    <property type="match status" value="1"/>
</dbReference>
<gene>
    <name evidence="1" type="primary">pepX</name>
    <name type="ordered locus">SPG_0820</name>
</gene>
<organism>
    <name type="scientific">Streptococcus pneumoniae serotype 19F (strain G54)</name>
    <dbReference type="NCBI Taxonomy" id="512566"/>
    <lineage>
        <taxon>Bacteria</taxon>
        <taxon>Bacillati</taxon>
        <taxon>Bacillota</taxon>
        <taxon>Bacilli</taxon>
        <taxon>Lactobacillales</taxon>
        <taxon>Streptococcaceae</taxon>
        <taxon>Streptococcus</taxon>
    </lineage>
</organism>
<evidence type="ECO:0000255" key="1">
    <source>
        <dbReference type="HAMAP-Rule" id="MF_00698"/>
    </source>
</evidence>
<protein>
    <recommendedName>
        <fullName evidence="1">Xaa-Pro dipeptidyl-peptidase</fullName>
        <ecNumber evidence="1">3.4.14.11</ecNumber>
    </recommendedName>
    <alternativeName>
        <fullName evidence="1">X-Pro dipeptidyl-peptidase</fullName>
    </alternativeName>
    <alternativeName>
        <fullName evidence="1">X-prolyl-dipeptidyl aminopeptidase</fullName>
        <shortName evidence="1">X-PDAP</shortName>
    </alternativeName>
</protein>
<accession>B5E3Z6</accession>
<name>PEPX_STRP4</name>
<keyword id="KW-0031">Aminopeptidase</keyword>
<keyword id="KW-0963">Cytoplasm</keyword>
<keyword id="KW-0378">Hydrolase</keyword>
<keyword id="KW-0645">Protease</keyword>
<keyword id="KW-0720">Serine protease</keyword>